<geneLocation type="chloroplast"/>
<accession>Q06J27</accession>
<evidence type="ECO:0000255" key="1">
    <source>
        <dbReference type="HAMAP-Rule" id="MF_00439"/>
    </source>
</evidence>
<protein>
    <recommendedName>
        <fullName evidence="1">Photosystem I assembly protein Ycf3</fullName>
    </recommendedName>
</protein>
<name>YCF3_BIGNA</name>
<organism>
    <name type="scientific">Bigelowiella natans</name>
    <name type="common">Pedinomonas minutissima</name>
    <name type="synonym">Chlorarachnion sp. (strain CCMP621)</name>
    <dbReference type="NCBI Taxonomy" id="227086"/>
    <lineage>
        <taxon>Eukaryota</taxon>
        <taxon>Sar</taxon>
        <taxon>Rhizaria</taxon>
        <taxon>Cercozoa</taxon>
        <taxon>Chlorarachniophyceae</taxon>
        <taxon>Bigelowiella</taxon>
    </lineage>
</organism>
<comment type="function">
    <text evidence="1">Essential for the assembly of the photosystem I (PSI) complex. May act as a chaperone-like factor to guide the assembly of the PSI subunits.</text>
</comment>
<comment type="subcellular location">
    <subcellularLocation>
        <location evidence="1">Plastid</location>
        <location evidence="1">Chloroplast thylakoid membrane</location>
        <topology evidence="1">Peripheral membrane protein</topology>
    </subcellularLocation>
</comment>
<comment type="similarity">
    <text evidence="1">Belongs to the Ycf3 family.</text>
</comment>
<gene>
    <name evidence="1" type="primary">ycf3</name>
</gene>
<dbReference type="EMBL" id="DQ851108">
    <property type="protein sequence ID" value="ABG91432.1"/>
    <property type="molecule type" value="Genomic_DNA"/>
</dbReference>
<dbReference type="RefSeq" id="YP_778600.1">
    <property type="nucleotide sequence ID" value="NC_008408.1"/>
</dbReference>
<dbReference type="SMR" id="Q06J27"/>
<dbReference type="GeneID" id="4353017"/>
<dbReference type="GO" id="GO:0009535">
    <property type="term" value="C:chloroplast thylakoid membrane"/>
    <property type="evidence" value="ECO:0007669"/>
    <property type="project" value="UniProtKB-SubCell"/>
</dbReference>
<dbReference type="GO" id="GO:0015979">
    <property type="term" value="P:photosynthesis"/>
    <property type="evidence" value="ECO:0007669"/>
    <property type="project" value="UniProtKB-UniRule"/>
</dbReference>
<dbReference type="Gene3D" id="1.25.40.10">
    <property type="entry name" value="Tetratricopeptide repeat domain"/>
    <property type="match status" value="1"/>
</dbReference>
<dbReference type="HAMAP" id="MF_00439">
    <property type="entry name" value="Ycf3"/>
    <property type="match status" value="1"/>
</dbReference>
<dbReference type="InterPro" id="IPR022818">
    <property type="entry name" value="PSI_Ycf3_assembly"/>
</dbReference>
<dbReference type="InterPro" id="IPR011990">
    <property type="entry name" value="TPR-like_helical_dom_sf"/>
</dbReference>
<dbReference type="InterPro" id="IPR019734">
    <property type="entry name" value="TPR_rpt"/>
</dbReference>
<dbReference type="InterPro" id="IPR051685">
    <property type="entry name" value="Ycf3/AcsC/BcsC/TPR_MFPF"/>
</dbReference>
<dbReference type="NCBIfam" id="NF002725">
    <property type="entry name" value="PRK02603.1"/>
    <property type="match status" value="1"/>
</dbReference>
<dbReference type="PANTHER" id="PTHR44943">
    <property type="entry name" value="CELLULOSE SYNTHASE OPERON PROTEIN C"/>
    <property type="match status" value="1"/>
</dbReference>
<dbReference type="PANTHER" id="PTHR44943:SF8">
    <property type="entry name" value="TPR REPEAT-CONTAINING PROTEIN MJ0263"/>
    <property type="match status" value="1"/>
</dbReference>
<dbReference type="Pfam" id="PF00515">
    <property type="entry name" value="TPR_1"/>
    <property type="match status" value="1"/>
</dbReference>
<dbReference type="SMART" id="SM00028">
    <property type="entry name" value="TPR"/>
    <property type="match status" value="3"/>
</dbReference>
<dbReference type="SUPFAM" id="SSF48452">
    <property type="entry name" value="TPR-like"/>
    <property type="match status" value="1"/>
</dbReference>
<dbReference type="PROSITE" id="PS50005">
    <property type="entry name" value="TPR"/>
    <property type="match status" value="2"/>
</dbReference>
<dbReference type="PROSITE" id="PS50293">
    <property type="entry name" value="TPR_REGION"/>
    <property type="match status" value="1"/>
</dbReference>
<sequence>MPRSQKNDNFIDKTFTVVADILLKVLPTSIDEKRAFTYYRNGMSAQSEGEYAEALQNYYQALRYEIDAYDRSYMLYNIGLIHSSNGQQSKALEYYYQALDRNPRLSQALNNIATIYHYRGEQALINNQDEISKIFFDKAADYWKEAIRLSPTSYTKAKNWLSVRNK</sequence>
<keyword id="KW-0150">Chloroplast</keyword>
<keyword id="KW-0472">Membrane</keyword>
<keyword id="KW-0602">Photosynthesis</keyword>
<keyword id="KW-0934">Plastid</keyword>
<keyword id="KW-0677">Repeat</keyword>
<keyword id="KW-0793">Thylakoid</keyword>
<keyword id="KW-0802">TPR repeat</keyword>
<proteinExistence type="inferred from homology"/>
<reference key="1">
    <citation type="journal article" date="2007" name="Mol. Biol. Evol.">
        <title>The complete chloroplast genome of the chlorarachniophyte Bigelowiella natans: evidence for independent origins of chlorarachniophyte and euglenid secondary endosymbionts.</title>
        <authorList>
            <person name="Rogers M.B."/>
            <person name="Gilson P.R."/>
            <person name="Su V."/>
            <person name="McFadden G.I."/>
            <person name="Keeling P.J."/>
        </authorList>
    </citation>
    <scope>NUCLEOTIDE SEQUENCE [LARGE SCALE GENOMIC DNA]</scope>
</reference>
<feature type="chain" id="PRO_0000295902" description="Photosystem I assembly protein Ycf3">
    <location>
        <begin position="1"/>
        <end position="166"/>
    </location>
</feature>
<feature type="repeat" description="TPR 1">
    <location>
        <begin position="35"/>
        <end position="68"/>
    </location>
</feature>
<feature type="repeat" description="TPR 2">
    <location>
        <begin position="72"/>
        <end position="105"/>
    </location>
</feature>
<feature type="repeat" description="TPR 3">
    <location>
        <begin position="120"/>
        <end position="153"/>
    </location>
</feature>